<protein>
    <recommendedName>
        <fullName evidence="8">Chloride intracellular channel Clic</fullName>
    </recommendedName>
</protein>
<comment type="function">
    <text evidence="3 4">Might insert into membranes and form chloride ion channels (PubMed:17985355). Channel activity depends on the pH (PubMed:17985355). May play a role in ethanol sensitivity (PubMed:22239914).</text>
</comment>
<comment type="subcellular location">
    <subcellularLocation>
        <location evidence="5">Mitochondrion</location>
    </subcellularLocation>
    <subcellularLocation>
        <location evidence="6">Membrane</location>
        <topology evidence="6">Single-pass membrane protein</topology>
    </subcellularLocation>
</comment>
<comment type="tissue specificity">
    <text evidence="5">Expressed in cardiac tubes.</text>
</comment>
<comment type="domain">
    <text evidence="1">Members of this family may change from a globular, soluble state to a state where the N-terminal domain is inserted into the membrane and functions as a chloride channel. A conformation change of the N-terminal domain is thought to expose hydrophobic surfaces that trigger membrane insertion.</text>
</comment>
<comment type="similarity">
    <text evidence="6">Belongs to the chloride channel CLIC family.</text>
</comment>
<comment type="caution">
    <text evidence="7">The structure contains a calcium molecule but it is unclear if this is an artifact of the crystallization process or if it has a physiological role in the activity regulation/formation of the channel.</text>
</comment>
<dbReference type="EMBL" id="AE014298">
    <property type="protein sequence ID" value="AAF48326.1"/>
    <property type="molecule type" value="Genomic_DNA"/>
</dbReference>
<dbReference type="EMBL" id="AY058721">
    <property type="protein sequence ID" value="AAL13950.1"/>
    <property type="molecule type" value="mRNA"/>
</dbReference>
<dbReference type="EMBL" id="AE014298">
    <property type="protein sequence ID" value="AGB95379.2"/>
    <property type="molecule type" value="Genomic_DNA"/>
</dbReference>
<dbReference type="RefSeq" id="NP_001259537.2">
    <property type="nucleotide sequence ID" value="NM_001272608.2"/>
</dbReference>
<dbReference type="RefSeq" id="NP_572928.1">
    <property type="nucleotide sequence ID" value="NM_132700.4"/>
</dbReference>
<dbReference type="PDB" id="2YV7">
    <property type="method" value="X-ray"/>
    <property type="resolution" value="1.70 A"/>
    <property type="chains" value="A=1-260"/>
</dbReference>
<dbReference type="PDBsum" id="2YV7"/>
<dbReference type="SMR" id="Q9VY78"/>
<dbReference type="FunCoup" id="Q9VY78">
    <property type="interactions" value="398"/>
</dbReference>
<dbReference type="IntAct" id="Q9VY78">
    <property type="interactions" value="159"/>
</dbReference>
<dbReference type="STRING" id="7227.FBpp0073666"/>
<dbReference type="PaxDb" id="7227-FBpp0304104"/>
<dbReference type="DNASU" id="32349"/>
<dbReference type="EnsemblMetazoa" id="FBtr0073835">
    <property type="protein sequence ID" value="FBpp0073666"/>
    <property type="gene ID" value="FBgn0030529"/>
</dbReference>
<dbReference type="EnsemblMetazoa" id="FBtr0346089">
    <property type="protein sequence ID" value="FBpp0311923"/>
    <property type="gene ID" value="FBgn0030529"/>
</dbReference>
<dbReference type="GeneID" id="32349"/>
<dbReference type="KEGG" id="dme:Dmel_CG10997"/>
<dbReference type="UCSC" id="CG10997-RA">
    <property type="organism name" value="d. melanogaster"/>
</dbReference>
<dbReference type="AGR" id="FB:FBgn0030529"/>
<dbReference type="CTD" id="32349"/>
<dbReference type="FlyBase" id="FBgn0030529">
    <property type="gene designation" value="Clic"/>
</dbReference>
<dbReference type="VEuPathDB" id="VectorBase:FBgn0030529"/>
<dbReference type="eggNOG" id="KOG1422">
    <property type="taxonomic scope" value="Eukaryota"/>
</dbReference>
<dbReference type="GeneTree" id="ENSGT00940000173425"/>
<dbReference type="HOGENOM" id="CLU_061051_0_0_1"/>
<dbReference type="InParanoid" id="Q9VY78"/>
<dbReference type="OMA" id="IHHYKEQ"/>
<dbReference type="OrthoDB" id="1935530at2759"/>
<dbReference type="BioGRID-ORCS" id="32349">
    <property type="hits" value="0 hits in 3 CRISPR screens"/>
</dbReference>
<dbReference type="EvolutionaryTrace" id="Q9VY78"/>
<dbReference type="GenomeRNAi" id="32349"/>
<dbReference type="PRO" id="PR:Q9VY78"/>
<dbReference type="Proteomes" id="UP000000803">
    <property type="component" value="Chromosome X"/>
</dbReference>
<dbReference type="Bgee" id="FBgn0030529">
    <property type="expression patterns" value="Expressed in enterocyte of posterior adult midgut epithelium (Drosophila) in digestive tract and 251 other cell types or tissues"/>
</dbReference>
<dbReference type="GO" id="GO:0016324">
    <property type="term" value="C:apical plasma membrane"/>
    <property type="evidence" value="ECO:0000318"/>
    <property type="project" value="GO_Central"/>
</dbReference>
<dbReference type="GO" id="GO:0005737">
    <property type="term" value="C:cytoplasm"/>
    <property type="evidence" value="ECO:0000318"/>
    <property type="project" value="GO_Central"/>
</dbReference>
<dbReference type="GO" id="GO:0005829">
    <property type="term" value="C:cytosol"/>
    <property type="evidence" value="ECO:0007005"/>
    <property type="project" value="FlyBase"/>
</dbReference>
<dbReference type="GO" id="GO:0016020">
    <property type="term" value="C:membrane"/>
    <property type="evidence" value="ECO:0000305"/>
    <property type="project" value="FlyBase"/>
</dbReference>
<dbReference type="GO" id="GO:0031966">
    <property type="term" value="C:mitochondrial membrane"/>
    <property type="evidence" value="ECO:0000314"/>
    <property type="project" value="FlyBase"/>
</dbReference>
<dbReference type="GO" id="GO:0005654">
    <property type="term" value="C:nucleoplasm"/>
    <property type="evidence" value="ECO:0007005"/>
    <property type="project" value="FlyBase"/>
</dbReference>
<dbReference type="GO" id="GO:0005509">
    <property type="term" value="F:calcium ion binding"/>
    <property type="evidence" value="ECO:0000314"/>
    <property type="project" value="FlyBase"/>
</dbReference>
<dbReference type="GO" id="GO:0005254">
    <property type="term" value="F:chloride channel activity"/>
    <property type="evidence" value="ECO:0000314"/>
    <property type="project" value="FlyBase"/>
</dbReference>
<dbReference type="GO" id="GO:0004602">
    <property type="term" value="F:glutathione peroxidase activity"/>
    <property type="evidence" value="ECO:0000250"/>
    <property type="project" value="FlyBase"/>
</dbReference>
<dbReference type="GO" id="GO:0008289">
    <property type="term" value="F:lipid binding"/>
    <property type="evidence" value="ECO:0000314"/>
    <property type="project" value="FlyBase"/>
</dbReference>
<dbReference type="GO" id="GO:0006821">
    <property type="term" value="P:chloride transport"/>
    <property type="evidence" value="ECO:0000314"/>
    <property type="project" value="FlyBase"/>
</dbReference>
<dbReference type="GO" id="GO:0048060">
    <property type="term" value="P:negative gravitaxis"/>
    <property type="evidence" value="ECO:0000314"/>
    <property type="project" value="FlyBase"/>
</dbReference>
<dbReference type="GO" id="GO:0097305">
    <property type="term" value="P:response to alcohol"/>
    <property type="evidence" value="ECO:0000314"/>
    <property type="project" value="FlyBase"/>
</dbReference>
<dbReference type="CDD" id="cd03198">
    <property type="entry name" value="GST_C_CLIC"/>
    <property type="match status" value="1"/>
</dbReference>
<dbReference type="CDD" id="cd03061">
    <property type="entry name" value="GST_N_CLIC"/>
    <property type="match status" value="1"/>
</dbReference>
<dbReference type="FunFam" id="3.40.30.10:FF:000188">
    <property type="entry name" value="Chloride intracellular channel exc-4"/>
    <property type="match status" value="1"/>
</dbReference>
<dbReference type="FunFam" id="1.20.1050.10:FF:000040">
    <property type="entry name" value="chloride intracellular channel exc-4"/>
    <property type="match status" value="1"/>
</dbReference>
<dbReference type="Gene3D" id="1.20.1050.10">
    <property type="match status" value="1"/>
</dbReference>
<dbReference type="Gene3D" id="3.40.30.10">
    <property type="entry name" value="Glutaredoxin"/>
    <property type="match status" value="1"/>
</dbReference>
<dbReference type="InterPro" id="IPR053823">
    <property type="entry name" value="CLIC_N"/>
</dbReference>
<dbReference type="InterPro" id="IPR036282">
    <property type="entry name" value="Glutathione-S-Trfase_C_sf"/>
</dbReference>
<dbReference type="InterPro" id="IPR036249">
    <property type="entry name" value="Thioredoxin-like_sf"/>
</dbReference>
<dbReference type="PANTHER" id="PTHR43920:SF5">
    <property type="entry name" value="CHLORIDE INTRACELLULAR CHANNEL CLIC"/>
    <property type="match status" value="1"/>
</dbReference>
<dbReference type="PANTHER" id="PTHR43920">
    <property type="entry name" value="CHLORIDE INTRACELLULAR CHANNEL, ISOFORM A"/>
    <property type="match status" value="1"/>
</dbReference>
<dbReference type="Pfam" id="PF22441">
    <property type="entry name" value="CLIC-like_N"/>
    <property type="match status" value="1"/>
</dbReference>
<dbReference type="SUPFAM" id="SSF47616">
    <property type="entry name" value="GST C-terminal domain-like"/>
    <property type="match status" value="1"/>
</dbReference>
<dbReference type="SUPFAM" id="SSF52833">
    <property type="entry name" value="Thioredoxin-like"/>
    <property type="match status" value="1"/>
</dbReference>
<name>CLIC_DROME</name>
<sequence length="260" mass="30170">MSEVESQQSQETNGSSKFDVPEIELIIKASTIDGRRKGACLFCQEYFMDLYLLAELKTISLKVTTVDMQKPPPDFRTNFEATHPPILIDNGLAILENEKIERHIMKNIPGGYNLFVQDKEVATLIENLYVKLKLMLVKKDEAKNNALLSHLRKINDHLSARNTRFLTGDTMCCFDCELMPRLQHIRVAGKYFVDFEIPTHLTALWRYMYHMYQLDAFTQSCPADQDIINHYKLQQSLKMKKHEELETPTFTTYIPIDISE</sequence>
<proteinExistence type="evidence at protein level"/>
<keyword id="KW-0002">3D-structure</keyword>
<keyword id="KW-0472">Membrane</keyword>
<keyword id="KW-0496">Mitochondrion</keyword>
<keyword id="KW-1185">Reference proteome</keyword>
<keyword id="KW-0812">Transmembrane</keyword>
<keyword id="KW-1133">Transmembrane helix</keyword>
<reference evidence="11" key="1">
    <citation type="journal article" date="2000" name="Science">
        <title>The genome sequence of Drosophila melanogaster.</title>
        <authorList>
            <person name="Adams M.D."/>
            <person name="Celniker S.E."/>
            <person name="Holt R.A."/>
            <person name="Evans C.A."/>
            <person name="Gocayne J.D."/>
            <person name="Amanatides P.G."/>
            <person name="Scherer S.E."/>
            <person name="Li P.W."/>
            <person name="Hoskins R.A."/>
            <person name="Galle R.F."/>
            <person name="George R.A."/>
            <person name="Lewis S.E."/>
            <person name="Richards S."/>
            <person name="Ashburner M."/>
            <person name="Henderson S.N."/>
            <person name="Sutton G.G."/>
            <person name="Wortman J.R."/>
            <person name="Yandell M.D."/>
            <person name="Zhang Q."/>
            <person name="Chen L.X."/>
            <person name="Brandon R.C."/>
            <person name="Rogers Y.-H.C."/>
            <person name="Blazej R.G."/>
            <person name="Champe M."/>
            <person name="Pfeiffer B.D."/>
            <person name="Wan K.H."/>
            <person name="Doyle C."/>
            <person name="Baxter E.G."/>
            <person name="Helt G."/>
            <person name="Nelson C.R."/>
            <person name="Miklos G.L.G."/>
            <person name="Abril J.F."/>
            <person name="Agbayani A."/>
            <person name="An H.-J."/>
            <person name="Andrews-Pfannkoch C."/>
            <person name="Baldwin D."/>
            <person name="Ballew R.M."/>
            <person name="Basu A."/>
            <person name="Baxendale J."/>
            <person name="Bayraktaroglu L."/>
            <person name="Beasley E.M."/>
            <person name="Beeson K.Y."/>
            <person name="Benos P.V."/>
            <person name="Berman B.P."/>
            <person name="Bhandari D."/>
            <person name="Bolshakov S."/>
            <person name="Borkova D."/>
            <person name="Botchan M.R."/>
            <person name="Bouck J."/>
            <person name="Brokstein P."/>
            <person name="Brottier P."/>
            <person name="Burtis K.C."/>
            <person name="Busam D.A."/>
            <person name="Butler H."/>
            <person name="Cadieu E."/>
            <person name="Center A."/>
            <person name="Chandra I."/>
            <person name="Cherry J.M."/>
            <person name="Cawley S."/>
            <person name="Dahlke C."/>
            <person name="Davenport L.B."/>
            <person name="Davies P."/>
            <person name="de Pablos B."/>
            <person name="Delcher A."/>
            <person name="Deng Z."/>
            <person name="Mays A.D."/>
            <person name="Dew I."/>
            <person name="Dietz S.M."/>
            <person name="Dodson K."/>
            <person name="Doup L.E."/>
            <person name="Downes M."/>
            <person name="Dugan-Rocha S."/>
            <person name="Dunkov B.C."/>
            <person name="Dunn P."/>
            <person name="Durbin K.J."/>
            <person name="Evangelista C.C."/>
            <person name="Ferraz C."/>
            <person name="Ferriera S."/>
            <person name="Fleischmann W."/>
            <person name="Fosler C."/>
            <person name="Gabrielian A.E."/>
            <person name="Garg N.S."/>
            <person name="Gelbart W.M."/>
            <person name="Glasser K."/>
            <person name="Glodek A."/>
            <person name="Gong F."/>
            <person name="Gorrell J.H."/>
            <person name="Gu Z."/>
            <person name="Guan P."/>
            <person name="Harris M."/>
            <person name="Harris N.L."/>
            <person name="Harvey D.A."/>
            <person name="Heiman T.J."/>
            <person name="Hernandez J.R."/>
            <person name="Houck J."/>
            <person name="Hostin D."/>
            <person name="Houston K.A."/>
            <person name="Howland T.J."/>
            <person name="Wei M.-H."/>
            <person name="Ibegwam C."/>
            <person name="Jalali M."/>
            <person name="Kalush F."/>
            <person name="Karpen G.H."/>
            <person name="Ke Z."/>
            <person name="Kennison J.A."/>
            <person name="Ketchum K.A."/>
            <person name="Kimmel B.E."/>
            <person name="Kodira C.D."/>
            <person name="Kraft C.L."/>
            <person name="Kravitz S."/>
            <person name="Kulp D."/>
            <person name="Lai Z."/>
            <person name="Lasko P."/>
            <person name="Lei Y."/>
            <person name="Levitsky A.A."/>
            <person name="Li J.H."/>
            <person name="Li Z."/>
            <person name="Liang Y."/>
            <person name="Lin X."/>
            <person name="Liu X."/>
            <person name="Mattei B."/>
            <person name="McIntosh T.C."/>
            <person name="McLeod M.P."/>
            <person name="McPherson D."/>
            <person name="Merkulov G."/>
            <person name="Milshina N.V."/>
            <person name="Mobarry C."/>
            <person name="Morris J."/>
            <person name="Moshrefi A."/>
            <person name="Mount S.M."/>
            <person name="Moy M."/>
            <person name="Murphy B."/>
            <person name="Murphy L."/>
            <person name="Muzny D.M."/>
            <person name="Nelson D.L."/>
            <person name="Nelson D.R."/>
            <person name="Nelson K.A."/>
            <person name="Nixon K."/>
            <person name="Nusskern D.R."/>
            <person name="Pacleb J.M."/>
            <person name="Palazzolo M."/>
            <person name="Pittman G.S."/>
            <person name="Pan S."/>
            <person name="Pollard J."/>
            <person name="Puri V."/>
            <person name="Reese M.G."/>
            <person name="Reinert K."/>
            <person name="Remington K."/>
            <person name="Saunders R.D.C."/>
            <person name="Scheeler F."/>
            <person name="Shen H."/>
            <person name="Shue B.C."/>
            <person name="Siden-Kiamos I."/>
            <person name="Simpson M."/>
            <person name="Skupski M.P."/>
            <person name="Smith T.J."/>
            <person name="Spier E."/>
            <person name="Spradling A.C."/>
            <person name="Stapleton M."/>
            <person name="Strong R."/>
            <person name="Sun E."/>
            <person name="Svirskas R."/>
            <person name="Tector C."/>
            <person name="Turner R."/>
            <person name="Venter E."/>
            <person name="Wang A.H."/>
            <person name="Wang X."/>
            <person name="Wang Z.-Y."/>
            <person name="Wassarman D.A."/>
            <person name="Weinstock G.M."/>
            <person name="Weissenbach J."/>
            <person name="Williams S.M."/>
            <person name="Woodage T."/>
            <person name="Worley K.C."/>
            <person name="Wu D."/>
            <person name="Yang S."/>
            <person name="Yao Q.A."/>
            <person name="Ye J."/>
            <person name="Yeh R.-F."/>
            <person name="Zaveri J.S."/>
            <person name="Zhan M."/>
            <person name="Zhang G."/>
            <person name="Zhao Q."/>
            <person name="Zheng L."/>
            <person name="Zheng X.H."/>
            <person name="Zhong F.N."/>
            <person name="Zhong W."/>
            <person name="Zhou X."/>
            <person name="Zhu S.C."/>
            <person name="Zhu X."/>
            <person name="Smith H.O."/>
            <person name="Gibbs R.A."/>
            <person name="Myers E.W."/>
            <person name="Rubin G.M."/>
            <person name="Venter J.C."/>
        </authorList>
    </citation>
    <scope>NUCLEOTIDE SEQUENCE [LARGE SCALE GENOMIC DNA]</scope>
    <source>
        <strain evidence="11">Berkeley</strain>
    </source>
</reference>
<reference evidence="11" key="2">
    <citation type="journal article" date="2002" name="Genome Biol.">
        <title>Annotation of the Drosophila melanogaster euchromatic genome: a systematic review.</title>
        <authorList>
            <person name="Misra S."/>
            <person name="Crosby M.A."/>
            <person name="Mungall C.J."/>
            <person name="Matthews B.B."/>
            <person name="Campbell K.S."/>
            <person name="Hradecky P."/>
            <person name="Huang Y."/>
            <person name="Kaminker J.S."/>
            <person name="Millburn G.H."/>
            <person name="Prochnik S.E."/>
            <person name="Smith C.D."/>
            <person name="Tupy J.L."/>
            <person name="Whitfield E.J."/>
            <person name="Bayraktaroglu L."/>
            <person name="Berman B.P."/>
            <person name="Bettencourt B.R."/>
            <person name="Celniker S.E."/>
            <person name="de Grey A.D.N.J."/>
            <person name="Drysdale R.A."/>
            <person name="Harris N.L."/>
            <person name="Richter J."/>
            <person name="Russo S."/>
            <person name="Schroeder A.J."/>
            <person name="Shu S.Q."/>
            <person name="Stapleton M."/>
            <person name="Yamada C."/>
            <person name="Ashburner M."/>
            <person name="Gelbart W.M."/>
            <person name="Rubin G.M."/>
            <person name="Lewis S.E."/>
        </authorList>
    </citation>
    <scope>GENOME REANNOTATION</scope>
    <source>
        <strain evidence="11">Berkeley</strain>
    </source>
</reference>
<reference evidence="9" key="3">
    <citation type="journal article" date="2002" name="Genome Biol.">
        <title>A Drosophila full-length cDNA resource.</title>
        <authorList>
            <person name="Stapleton M."/>
            <person name="Carlson J.W."/>
            <person name="Brokstein P."/>
            <person name="Yu C."/>
            <person name="Champe M."/>
            <person name="George R.A."/>
            <person name="Guarin H."/>
            <person name="Kronmiller B."/>
            <person name="Pacleb J.M."/>
            <person name="Park S."/>
            <person name="Wan K.H."/>
            <person name="Rubin G.M."/>
            <person name="Celniker S.E."/>
        </authorList>
    </citation>
    <scope>NUCLEOTIDE SEQUENCE [LARGE SCALE MRNA]</scope>
    <source>
        <strain evidence="9">Berkeley</strain>
        <tissue evidence="9">Embryo</tissue>
    </source>
</reference>
<reference evidence="6" key="4">
    <citation type="journal article" date="2012" name="Genes Brain Behav.">
        <title>Chloride intracellular channels modulate acute ethanol behaviors in Drosophila, Caenorhabditis elegans and mice.</title>
        <authorList>
            <person name="Bhandari P."/>
            <person name="Hill J.S."/>
            <person name="Farris S.P."/>
            <person name="Costin B."/>
            <person name="Martin I."/>
            <person name="Chan C.L."/>
            <person name="Alaimo J.T."/>
            <person name="Bettinger J.C."/>
            <person name="Davies A.G."/>
            <person name="Miles M.F."/>
            <person name="Grotewiel M."/>
        </authorList>
    </citation>
    <scope>FUNCTION</scope>
</reference>
<reference evidence="6" key="5">
    <citation type="journal article" date="2016" name="Mitochondrion">
        <title>Molecular identity of cardiac mitochondrial chloride intracellular channel proteins.</title>
        <authorList>
            <person name="Ponnalagu D."/>
            <person name="Gururaja Rao S."/>
            <person name="Farber J."/>
            <person name="Xin W."/>
            <person name="Hussain A.T."/>
            <person name="Shah K."/>
            <person name="Tanda S."/>
            <person name="Berryman M."/>
            <person name="Edwards J.C."/>
            <person name="Singh H."/>
        </authorList>
    </citation>
    <scope>SUBCELLULAR LOCATION</scope>
    <scope>TISSUE SPECIFICITY</scope>
</reference>
<reference evidence="12" key="6">
    <citation type="journal article" date="2008" name="Proteins">
        <title>Comparison of vertebrate and invertebrate CLIC proteins: the crystal structures of Caenorhabditis elegans EXC-4 and Drosophila melanogaster DmCLIC.</title>
        <authorList>
            <person name="Littler D.R."/>
            <person name="Harrop S.J."/>
            <person name="Brown L.J."/>
            <person name="Pankhurst G.J."/>
            <person name="Mynott A.V."/>
            <person name="Luciani P."/>
            <person name="Mandyam R.A."/>
            <person name="Mazzanti M."/>
            <person name="Tanda S."/>
            <person name="Berryman M.A."/>
            <person name="Breit S.N."/>
            <person name="Curmi P.M.G."/>
        </authorList>
    </citation>
    <scope>X-RAY CRYSTALLOGRAPHY (1.70 ANGSTROMS)</scope>
    <scope>FUNCTION</scope>
    <scope>SUBUNIT</scope>
</reference>
<organism evidence="11">
    <name type="scientific">Drosophila melanogaster</name>
    <name type="common">Fruit fly</name>
    <dbReference type="NCBI Taxonomy" id="7227"/>
    <lineage>
        <taxon>Eukaryota</taxon>
        <taxon>Metazoa</taxon>
        <taxon>Ecdysozoa</taxon>
        <taxon>Arthropoda</taxon>
        <taxon>Hexapoda</taxon>
        <taxon>Insecta</taxon>
        <taxon>Pterygota</taxon>
        <taxon>Neoptera</taxon>
        <taxon>Endopterygota</taxon>
        <taxon>Diptera</taxon>
        <taxon>Brachycera</taxon>
        <taxon>Muscomorpha</taxon>
        <taxon>Ephydroidea</taxon>
        <taxon>Drosophilidae</taxon>
        <taxon>Drosophila</taxon>
        <taxon>Sophophora</taxon>
    </lineage>
</organism>
<gene>
    <name evidence="10" type="primary">Clic</name>
    <name evidence="10" type="ORF">CG10997</name>
</gene>
<evidence type="ECO:0000250" key="1">
    <source>
        <dbReference type="UniProtKB" id="O00299"/>
    </source>
</evidence>
<evidence type="ECO:0000255" key="2"/>
<evidence type="ECO:0000269" key="3">
    <source>
    </source>
</evidence>
<evidence type="ECO:0000269" key="4">
    <source>
    </source>
</evidence>
<evidence type="ECO:0000269" key="5">
    <source>
    </source>
</evidence>
<evidence type="ECO:0000305" key="6"/>
<evidence type="ECO:0000305" key="7">
    <source>
    </source>
</evidence>
<evidence type="ECO:0000312" key="8">
    <source>
        <dbReference type="EMBL" id="AAF48326.1"/>
    </source>
</evidence>
<evidence type="ECO:0000312" key="9">
    <source>
        <dbReference type="EMBL" id="AAL13950.1"/>
    </source>
</evidence>
<evidence type="ECO:0000312" key="10">
    <source>
        <dbReference type="FlyBase" id="FBgn0030529"/>
    </source>
</evidence>
<evidence type="ECO:0000312" key="11">
    <source>
        <dbReference type="Proteomes" id="UP000000803"/>
    </source>
</evidence>
<evidence type="ECO:0007744" key="12">
    <source>
        <dbReference type="PDB" id="2YV7"/>
    </source>
</evidence>
<evidence type="ECO:0007829" key="13">
    <source>
        <dbReference type="PDB" id="2YV7"/>
    </source>
</evidence>
<feature type="chain" id="PRO_0000458218" description="Chloride intracellular channel Clic">
    <location>
        <begin position="1"/>
        <end position="260"/>
    </location>
</feature>
<feature type="transmembrane region" description="Helical; Note=After insertion into the membrane" evidence="2">
    <location>
        <begin position="42"/>
        <end position="66"/>
    </location>
</feature>
<feature type="helix" evidence="13">
    <location>
        <begin position="16"/>
        <end position="18"/>
    </location>
</feature>
<feature type="strand" evidence="13">
    <location>
        <begin position="22"/>
        <end position="29"/>
    </location>
</feature>
<feature type="turn" evidence="13">
    <location>
        <begin position="31"/>
        <end position="33"/>
    </location>
</feature>
<feature type="strand" evidence="13">
    <location>
        <begin position="34"/>
        <end position="37"/>
    </location>
</feature>
<feature type="helix" evidence="13">
    <location>
        <begin position="41"/>
        <end position="55"/>
    </location>
</feature>
<feature type="strand" evidence="13">
    <location>
        <begin position="58"/>
        <end position="66"/>
    </location>
</feature>
<feature type="strand" evidence="13">
    <location>
        <begin position="86"/>
        <end position="89"/>
    </location>
</feature>
<feature type="strand" evidence="13">
    <location>
        <begin position="92"/>
        <end position="94"/>
    </location>
</feature>
<feature type="helix" evidence="13">
    <location>
        <begin position="97"/>
        <end position="107"/>
    </location>
</feature>
<feature type="helix" evidence="13">
    <location>
        <begin position="111"/>
        <end position="114"/>
    </location>
</feature>
<feature type="helix" evidence="13">
    <location>
        <begin position="119"/>
        <end position="125"/>
    </location>
</feature>
<feature type="helix" evidence="13">
    <location>
        <begin position="128"/>
        <end position="136"/>
    </location>
</feature>
<feature type="helix" evidence="13">
    <location>
        <begin position="141"/>
        <end position="161"/>
    </location>
</feature>
<feature type="strand" evidence="13">
    <location>
        <begin position="164"/>
        <end position="170"/>
    </location>
</feature>
<feature type="helix" evidence="13">
    <location>
        <begin position="173"/>
        <end position="193"/>
    </location>
</feature>
<feature type="helix" evidence="13">
    <location>
        <begin position="202"/>
        <end position="212"/>
    </location>
</feature>
<feature type="helix" evidence="13">
    <location>
        <begin position="215"/>
        <end position="220"/>
    </location>
</feature>
<feature type="helix" evidence="13">
    <location>
        <begin position="224"/>
        <end position="235"/>
    </location>
</feature>
<accession>Q9VY78</accession>
<accession>M9PHS1</accession>